<organism evidence="2">
    <name type="scientific">Penaeus monodon</name>
    <name type="common">Giant tiger prawn</name>
    <dbReference type="NCBI Taxonomy" id="6687"/>
    <lineage>
        <taxon>Eukaryota</taxon>
        <taxon>Metazoa</taxon>
        <taxon>Ecdysozoa</taxon>
        <taxon>Arthropoda</taxon>
        <taxon>Crustacea</taxon>
        <taxon>Multicrustacea</taxon>
        <taxon>Malacostraca</taxon>
        <taxon>Eumalacostraca</taxon>
        <taxon>Eucarida</taxon>
        <taxon>Decapoda</taxon>
        <taxon>Dendrobranchiata</taxon>
        <taxon>Penaeoidea</taxon>
        <taxon>Penaeidae</taxon>
        <taxon>Penaeus</taxon>
    </lineage>
</organism>
<proteinExistence type="evidence at protein level"/>
<keyword id="KW-0027">Amidation</keyword>
<keyword id="KW-0903">Direct protein sequencing</keyword>
<keyword id="KW-0527">Neuropeptide</keyword>
<keyword id="KW-0964">Secreted</keyword>
<name>FAR2_PENMO</name>
<comment type="subcellular location">
    <subcellularLocation>
        <location>Secreted</location>
    </subcellularLocation>
</comment>
<comment type="mass spectrometry" mass="1260.0" method="MALDI" evidence="1"/>
<comment type="similarity">
    <text evidence="2">Belongs to the FARP (FMRFamide related peptide) family.</text>
</comment>
<protein>
    <recommendedName>
        <fullName>FMRFamide-like neuropeptide FLP2</fullName>
    </recommendedName>
    <alternativeName>
        <fullName>AYSNLNYLRF-amide</fullName>
    </alternativeName>
</protein>
<sequence length="10" mass="1260">AYSNLNYLRF</sequence>
<dbReference type="GO" id="GO:0005576">
    <property type="term" value="C:extracellular region"/>
    <property type="evidence" value="ECO:0007669"/>
    <property type="project" value="UniProtKB-SubCell"/>
</dbReference>
<dbReference type="GO" id="GO:0007218">
    <property type="term" value="P:neuropeptide signaling pathway"/>
    <property type="evidence" value="ECO:0000304"/>
    <property type="project" value="UniProtKB"/>
</dbReference>
<accession>P83317</accession>
<reference key="1">
    <citation type="journal article" date="2002" name="Comp. Biochem. Physiol.">
        <title>Seven novel FMRFamide-like neuropeptide sequences from the eyestalk of the giant tiger prawn Penaeus monodon.</title>
        <authorList>
            <person name="Sithigorngul P."/>
            <person name="Pupuem J."/>
            <person name="Krungkasem C."/>
            <person name="Longyant S."/>
            <person name="Chaivisuthangkura P."/>
            <person name="Sithigorngul W."/>
            <person name="Petsom A."/>
        </authorList>
    </citation>
    <scope>PROTEIN SEQUENCE</scope>
    <scope>AMIDATION AT PHE-10</scope>
    <scope>MASS SPECTROMETRY</scope>
    <source>
        <tissue>Eyestalk</tissue>
    </source>
</reference>
<feature type="peptide" id="PRO_0000043698" description="FMRFamide-like neuropeptide FLP2">
    <location>
        <begin position="1"/>
        <end position="10"/>
    </location>
</feature>
<feature type="modified residue" description="Phenylalanine amide" evidence="1">
    <location>
        <position position="10"/>
    </location>
</feature>
<evidence type="ECO:0000269" key="1">
    <source>
    </source>
</evidence>
<evidence type="ECO:0000305" key="2"/>